<evidence type="ECO:0000255" key="1">
    <source>
        <dbReference type="HAMAP-Rule" id="MF_01033"/>
    </source>
</evidence>
<protein>
    <recommendedName>
        <fullName evidence="1">3-isopropylmalate dehydrogenase</fullName>
        <ecNumber evidence="1">1.1.1.85</ecNumber>
    </recommendedName>
    <alternativeName>
        <fullName evidence="1">3-IPM-DH</fullName>
    </alternativeName>
    <alternativeName>
        <fullName evidence="1">Beta-IPM dehydrogenase</fullName>
        <shortName evidence="1">IMDH</shortName>
    </alternativeName>
</protein>
<gene>
    <name evidence="1" type="primary">leuB</name>
    <name type="ordered locus">BAV2268</name>
</gene>
<dbReference type="EC" id="1.1.1.85" evidence="1"/>
<dbReference type="EMBL" id="AM167904">
    <property type="protein sequence ID" value="CAJ49878.1"/>
    <property type="molecule type" value="Genomic_DNA"/>
</dbReference>
<dbReference type="RefSeq" id="WP_012417929.1">
    <property type="nucleotide sequence ID" value="NC_010645.1"/>
</dbReference>
<dbReference type="SMR" id="Q2KYL5"/>
<dbReference type="STRING" id="360910.BAV2268"/>
<dbReference type="GeneID" id="92934618"/>
<dbReference type="KEGG" id="bav:BAV2268"/>
<dbReference type="eggNOG" id="COG0473">
    <property type="taxonomic scope" value="Bacteria"/>
</dbReference>
<dbReference type="HOGENOM" id="CLU_031953_0_3_4"/>
<dbReference type="OrthoDB" id="5289857at2"/>
<dbReference type="UniPathway" id="UPA00048">
    <property type="reaction ID" value="UER00072"/>
</dbReference>
<dbReference type="Proteomes" id="UP000001977">
    <property type="component" value="Chromosome"/>
</dbReference>
<dbReference type="GO" id="GO:0005829">
    <property type="term" value="C:cytosol"/>
    <property type="evidence" value="ECO:0007669"/>
    <property type="project" value="TreeGrafter"/>
</dbReference>
<dbReference type="GO" id="GO:0003862">
    <property type="term" value="F:3-isopropylmalate dehydrogenase activity"/>
    <property type="evidence" value="ECO:0007669"/>
    <property type="project" value="UniProtKB-UniRule"/>
</dbReference>
<dbReference type="GO" id="GO:0000287">
    <property type="term" value="F:magnesium ion binding"/>
    <property type="evidence" value="ECO:0007669"/>
    <property type="project" value="InterPro"/>
</dbReference>
<dbReference type="GO" id="GO:0051287">
    <property type="term" value="F:NAD binding"/>
    <property type="evidence" value="ECO:0007669"/>
    <property type="project" value="InterPro"/>
</dbReference>
<dbReference type="GO" id="GO:0009098">
    <property type="term" value="P:L-leucine biosynthetic process"/>
    <property type="evidence" value="ECO:0007669"/>
    <property type="project" value="UniProtKB-UniRule"/>
</dbReference>
<dbReference type="FunFam" id="3.40.718.10:FF:000028">
    <property type="entry name" value="3-isopropylmalate dehydrogenase"/>
    <property type="match status" value="1"/>
</dbReference>
<dbReference type="Gene3D" id="3.40.718.10">
    <property type="entry name" value="Isopropylmalate Dehydrogenase"/>
    <property type="match status" value="1"/>
</dbReference>
<dbReference type="HAMAP" id="MF_01033">
    <property type="entry name" value="LeuB_type1"/>
    <property type="match status" value="1"/>
</dbReference>
<dbReference type="InterPro" id="IPR019818">
    <property type="entry name" value="IsoCit/isopropylmalate_DH_CS"/>
</dbReference>
<dbReference type="InterPro" id="IPR024084">
    <property type="entry name" value="IsoPropMal-DH-like_dom"/>
</dbReference>
<dbReference type="InterPro" id="IPR004429">
    <property type="entry name" value="Isopropylmalate_DH"/>
</dbReference>
<dbReference type="NCBIfam" id="TIGR00169">
    <property type="entry name" value="leuB"/>
    <property type="match status" value="1"/>
</dbReference>
<dbReference type="PANTHER" id="PTHR42979">
    <property type="entry name" value="3-ISOPROPYLMALATE DEHYDROGENASE"/>
    <property type="match status" value="1"/>
</dbReference>
<dbReference type="PANTHER" id="PTHR42979:SF1">
    <property type="entry name" value="3-ISOPROPYLMALATE DEHYDROGENASE"/>
    <property type="match status" value="1"/>
</dbReference>
<dbReference type="Pfam" id="PF00180">
    <property type="entry name" value="Iso_dh"/>
    <property type="match status" value="1"/>
</dbReference>
<dbReference type="SMART" id="SM01329">
    <property type="entry name" value="Iso_dh"/>
    <property type="match status" value="1"/>
</dbReference>
<dbReference type="SUPFAM" id="SSF53659">
    <property type="entry name" value="Isocitrate/Isopropylmalate dehydrogenase-like"/>
    <property type="match status" value="1"/>
</dbReference>
<dbReference type="PROSITE" id="PS00470">
    <property type="entry name" value="IDH_IMDH"/>
    <property type="match status" value="1"/>
</dbReference>
<feature type="chain" id="PRO_0000250102" description="3-isopropylmalate dehydrogenase">
    <location>
        <begin position="1"/>
        <end position="358"/>
    </location>
</feature>
<feature type="binding site" evidence="1">
    <location>
        <position position="92"/>
    </location>
    <ligand>
        <name>substrate</name>
    </ligand>
</feature>
<feature type="binding site" evidence="1">
    <location>
        <position position="102"/>
    </location>
    <ligand>
        <name>substrate</name>
    </ligand>
</feature>
<feature type="binding site" evidence="1">
    <location>
        <position position="130"/>
    </location>
    <ligand>
        <name>substrate</name>
    </ligand>
</feature>
<feature type="binding site" evidence="1">
    <location>
        <position position="224"/>
    </location>
    <ligand>
        <name>Mg(2+)</name>
        <dbReference type="ChEBI" id="CHEBI:18420"/>
    </ligand>
</feature>
<feature type="binding site" evidence="1">
    <location>
        <position position="224"/>
    </location>
    <ligand>
        <name>substrate</name>
    </ligand>
</feature>
<feature type="binding site" evidence="1">
    <location>
        <position position="248"/>
    </location>
    <ligand>
        <name>Mg(2+)</name>
        <dbReference type="ChEBI" id="CHEBI:18420"/>
    </ligand>
</feature>
<feature type="binding site" evidence="1">
    <location>
        <position position="252"/>
    </location>
    <ligand>
        <name>Mg(2+)</name>
        <dbReference type="ChEBI" id="CHEBI:18420"/>
    </ligand>
</feature>
<feature type="binding site" evidence="1">
    <location>
        <begin position="282"/>
        <end position="294"/>
    </location>
    <ligand>
        <name>NAD(+)</name>
        <dbReference type="ChEBI" id="CHEBI:57540"/>
    </ligand>
</feature>
<feature type="site" description="Important for catalysis" evidence="1">
    <location>
        <position position="137"/>
    </location>
</feature>
<feature type="site" description="Important for catalysis" evidence="1">
    <location>
        <position position="192"/>
    </location>
</feature>
<reference key="1">
    <citation type="journal article" date="2006" name="J. Bacteriol.">
        <title>Comparison of the genome sequence of the poultry pathogen Bordetella avium with those of B. bronchiseptica, B. pertussis, and B. parapertussis reveals extensive diversity in surface structures associated with host interaction.</title>
        <authorList>
            <person name="Sebaihia M."/>
            <person name="Preston A."/>
            <person name="Maskell D.J."/>
            <person name="Kuzmiak H."/>
            <person name="Connell T.D."/>
            <person name="King N.D."/>
            <person name="Orndorff P.E."/>
            <person name="Miyamoto D.M."/>
            <person name="Thomson N.R."/>
            <person name="Harris D."/>
            <person name="Goble A."/>
            <person name="Lord A."/>
            <person name="Murphy L."/>
            <person name="Quail M.A."/>
            <person name="Rutter S."/>
            <person name="Squares R."/>
            <person name="Squares S."/>
            <person name="Woodward J."/>
            <person name="Parkhill J."/>
            <person name="Temple L.M."/>
        </authorList>
    </citation>
    <scope>NUCLEOTIDE SEQUENCE [LARGE SCALE GENOMIC DNA]</scope>
    <source>
        <strain>197N</strain>
    </source>
</reference>
<comment type="function">
    <text evidence="1">Catalyzes the oxidation of 3-carboxy-2-hydroxy-4-methylpentanoate (3-isopropylmalate) to 3-carboxy-4-methyl-2-oxopentanoate. The product decarboxylates to 4-methyl-2 oxopentanoate.</text>
</comment>
<comment type="catalytic activity">
    <reaction evidence="1">
        <text>(2R,3S)-3-isopropylmalate + NAD(+) = 4-methyl-2-oxopentanoate + CO2 + NADH</text>
        <dbReference type="Rhea" id="RHEA:32271"/>
        <dbReference type="ChEBI" id="CHEBI:16526"/>
        <dbReference type="ChEBI" id="CHEBI:17865"/>
        <dbReference type="ChEBI" id="CHEBI:35121"/>
        <dbReference type="ChEBI" id="CHEBI:57540"/>
        <dbReference type="ChEBI" id="CHEBI:57945"/>
        <dbReference type="EC" id="1.1.1.85"/>
    </reaction>
</comment>
<comment type="cofactor">
    <cofactor evidence="1">
        <name>Mg(2+)</name>
        <dbReference type="ChEBI" id="CHEBI:18420"/>
    </cofactor>
    <cofactor evidence="1">
        <name>Mn(2+)</name>
        <dbReference type="ChEBI" id="CHEBI:29035"/>
    </cofactor>
    <text evidence="1">Binds 1 Mg(2+) or Mn(2+) ion per subunit.</text>
</comment>
<comment type="pathway">
    <text evidence="1">Amino-acid biosynthesis; L-leucine biosynthesis; L-leucine from 3-methyl-2-oxobutanoate: step 3/4.</text>
</comment>
<comment type="subunit">
    <text evidence="1">Homodimer.</text>
</comment>
<comment type="subcellular location">
    <subcellularLocation>
        <location evidence="1">Cytoplasm</location>
    </subcellularLocation>
</comment>
<comment type="similarity">
    <text evidence="1">Belongs to the isocitrate and isopropylmalate dehydrogenases family. LeuB type 1 subfamily.</text>
</comment>
<keyword id="KW-0028">Amino-acid biosynthesis</keyword>
<keyword id="KW-0100">Branched-chain amino acid biosynthesis</keyword>
<keyword id="KW-0963">Cytoplasm</keyword>
<keyword id="KW-0432">Leucine biosynthesis</keyword>
<keyword id="KW-0460">Magnesium</keyword>
<keyword id="KW-0464">Manganese</keyword>
<keyword id="KW-0479">Metal-binding</keyword>
<keyword id="KW-0520">NAD</keyword>
<keyword id="KW-0560">Oxidoreductase</keyword>
<keyword id="KW-1185">Reference proteome</keyword>
<proteinExistence type="inferred from homology"/>
<organism>
    <name type="scientific">Bordetella avium (strain 197N)</name>
    <dbReference type="NCBI Taxonomy" id="360910"/>
    <lineage>
        <taxon>Bacteria</taxon>
        <taxon>Pseudomonadati</taxon>
        <taxon>Pseudomonadota</taxon>
        <taxon>Betaproteobacteria</taxon>
        <taxon>Burkholderiales</taxon>
        <taxon>Alcaligenaceae</taxon>
        <taxon>Bordetella</taxon>
    </lineage>
</organism>
<accession>Q2KYL5</accession>
<sequence length="358" mass="38511">MTQKIAVLPGDGIGPEIVEQAVRVLQALNLPLELQEAKVGGAAFDAFEHPLPPATLGLAKSSHAVLFGAVGDWKYDSLPREFRPEQAILGLRRALGLFANLRPAILYPELASASSLKPEIVAGLDIIIIRELTGDIYFGTPRGVRSAPDGVFSGEREGYDTMRYAESEVRRIAHVGFETARKRNKKLCSVDKANVLETSQFWRDIVIEVAREYPDVELSHMYVDNAAMQLVRNPRQFDVIVTGNLFGDILSDEAAMLTGSIGMLPSASLNASGQGLYEPSHGSAPDIAGQGIANPLATILSAAMLLRYSLNQPAQADRIEAAVRKVLAQGLRTADIHEAGTTKVSTSQMGDAVLKALA</sequence>
<name>LEU3_BORA1</name>